<dbReference type="EMBL" id="X16045">
    <property type="protein sequence ID" value="CAA34168.1"/>
    <property type="molecule type" value="Genomic_DNA"/>
</dbReference>
<dbReference type="PIR" id="JS0448">
    <property type="entry name" value="BVECAR"/>
</dbReference>
<dbReference type="RefSeq" id="WP_011117595.1">
    <property type="nucleotide sequence ID" value="NZ_WAIN01000020.1"/>
</dbReference>
<dbReference type="SMR" id="P15905"/>
<dbReference type="STRING" id="585034.ECIAI1_3648"/>
<dbReference type="GO" id="GO:0003677">
    <property type="term" value="F:DNA binding"/>
    <property type="evidence" value="ECO:0007669"/>
    <property type="project" value="UniProtKB-KW"/>
</dbReference>
<dbReference type="GO" id="GO:0003700">
    <property type="term" value="F:DNA-binding transcription factor activity"/>
    <property type="evidence" value="ECO:0007669"/>
    <property type="project" value="InterPro"/>
</dbReference>
<dbReference type="GO" id="GO:0046685">
    <property type="term" value="P:response to arsenic-containing substance"/>
    <property type="evidence" value="ECO:0007669"/>
    <property type="project" value="UniProtKB-KW"/>
</dbReference>
<dbReference type="CDD" id="cd00090">
    <property type="entry name" value="HTH_ARSR"/>
    <property type="match status" value="1"/>
</dbReference>
<dbReference type="FunFam" id="1.10.10.10:FF:000279">
    <property type="entry name" value="Transcriptional regulator, ArsR family"/>
    <property type="match status" value="1"/>
</dbReference>
<dbReference type="Gene3D" id="1.10.10.10">
    <property type="entry name" value="Winged helix-like DNA-binding domain superfamily/Winged helix DNA-binding domain"/>
    <property type="match status" value="1"/>
</dbReference>
<dbReference type="InterPro" id="IPR011991">
    <property type="entry name" value="ArsR-like_HTH"/>
</dbReference>
<dbReference type="InterPro" id="IPR018334">
    <property type="entry name" value="ArsR_HTH"/>
</dbReference>
<dbReference type="InterPro" id="IPR001845">
    <property type="entry name" value="HTH_ArsR_DNA-bd_dom"/>
</dbReference>
<dbReference type="InterPro" id="IPR051081">
    <property type="entry name" value="HTH_MetalResp_TranReg"/>
</dbReference>
<dbReference type="InterPro" id="IPR036388">
    <property type="entry name" value="WH-like_DNA-bd_sf"/>
</dbReference>
<dbReference type="InterPro" id="IPR036390">
    <property type="entry name" value="WH_DNA-bd_sf"/>
</dbReference>
<dbReference type="NCBIfam" id="NF033788">
    <property type="entry name" value="HTH_metalloreg"/>
    <property type="match status" value="1"/>
</dbReference>
<dbReference type="NCBIfam" id="NF007528">
    <property type="entry name" value="PRK10141.1"/>
    <property type="match status" value="1"/>
</dbReference>
<dbReference type="PANTHER" id="PTHR33154:SF18">
    <property type="entry name" value="ARSENICAL RESISTANCE OPERON REPRESSOR"/>
    <property type="match status" value="1"/>
</dbReference>
<dbReference type="PANTHER" id="PTHR33154">
    <property type="entry name" value="TRANSCRIPTIONAL REGULATOR, ARSR FAMILY"/>
    <property type="match status" value="1"/>
</dbReference>
<dbReference type="Pfam" id="PF01022">
    <property type="entry name" value="HTH_5"/>
    <property type="match status" value="1"/>
</dbReference>
<dbReference type="PRINTS" id="PR00778">
    <property type="entry name" value="HTHARSR"/>
</dbReference>
<dbReference type="SMART" id="SM00418">
    <property type="entry name" value="HTH_ARSR"/>
    <property type="match status" value="1"/>
</dbReference>
<dbReference type="SUPFAM" id="SSF46785">
    <property type="entry name" value="Winged helix' DNA-binding domain"/>
    <property type="match status" value="1"/>
</dbReference>
<dbReference type="PROSITE" id="PS00846">
    <property type="entry name" value="HTH_ARSR_1"/>
    <property type="match status" value="1"/>
</dbReference>
<dbReference type="PROSITE" id="PS50987">
    <property type="entry name" value="HTH_ARSR_2"/>
    <property type="match status" value="1"/>
</dbReference>
<accession>P15905</accession>
<evidence type="ECO:0000255" key="1">
    <source>
        <dbReference type="PROSITE-ProRule" id="PRU00340"/>
    </source>
</evidence>
<evidence type="ECO:0000269" key="2">
    <source>
    </source>
</evidence>
<organism>
    <name type="scientific">Escherichia coli</name>
    <dbReference type="NCBI Taxonomy" id="562"/>
    <lineage>
        <taxon>Bacteria</taxon>
        <taxon>Pseudomonadati</taxon>
        <taxon>Pseudomonadota</taxon>
        <taxon>Gammaproteobacteria</taxon>
        <taxon>Enterobacterales</taxon>
        <taxon>Enterobacteriaceae</taxon>
        <taxon>Escherichia</taxon>
    </lineage>
</organism>
<sequence length="117" mass="13199">MLQLTPLQLFKNLSDETRLGIVLLLREMGELCVCDLCMALDQSQPKISRHLAMLRESGILLDRKQGKWVHYRLSPHIPSWAAQIIEQAWLSQQDDVQVIARKLASVNCSGSSKAVCI</sequence>
<feature type="chain" id="PRO_0000160611" description="Arsenical resistance operon repressor">
    <location>
        <begin position="1"/>
        <end position="117"/>
    </location>
</feature>
<feature type="domain" description="HTH arsR-type" evidence="1">
    <location>
        <begin position="1"/>
        <end position="92"/>
    </location>
</feature>
<feature type="DNA-binding region" description="H-T-H motif" evidence="1">
    <location>
        <begin position="33"/>
        <end position="52"/>
    </location>
</feature>
<name>ARSR1_ECOLX</name>
<geneLocation type="plasmid">
    <name>R773</name>
</geneLocation>
<reference key="1">
    <citation type="journal article" date="1990" name="Nucleic Acids Res.">
        <title>Identification of the metalloregulatory element of the plasmid-encoded arsenical resistance operon.</title>
        <authorList>
            <person name="San Francisco M.J.D."/>
            <person name="Hope C.L."/>
            <person name="Owolabi J.B."/>
            <person name="Tisa L.S."/>
            <person name="Rosen B.P."/>
        </authorList>
    </citation>
    <scope>NUCLEOTIDE SEQUENCE [GENOMIC DNA]</scope>
</reference>
<reference key="2">
    <citation type="journal article" date="1991" name="Mol. Microbiol.">
        <title>The ArsR protein is a trans-acting regulatory protein.</title>
        <authorList>
            <person name="Wu J."/>
            <person name="Rosen B.P."/>
        </authorList>
    </citation>
    <scope>FUNCTION</scope>
</reference>
<reference key="3">
    <citation type="journal article" date="1993" name="J. Biol. Chem.">
        <title>Metalloregulated expression of the ars operon.</title>
        <authorList>
            <person name="Wu J."/>
            <person name="Rosen B.P."/>
        </authorList>
    </citation>
    <scope>METAL-REGULATION</scope>
</reference>
<proteinExistence type="predicted"/>
<comment type="function">
    <text evidence="2">Transcriptional repressor for the ars operon. ArsR is a trans-acting regulatory protein which controls its own expression. The repressive effect of ArsR is alleviated by oxyions of +III oxidation state of arsenic, antimony, and bismuth, as well as arsenate (As(V)).</text>
</comment>
<comment type="subunit">
    <text>Binds DNA as a homodimer.</text>
</comment>
<keyword id="KW-0059">Arsenical resistance</keyword>
<keyword id="KW-0238">DNA-binding</keyword>
<keyword id="KW-0614">Plasmid</keyword>
<keyword id="KW-0678">Repressor</keyword>
<keyword id="KW-0804">Transcription</keyword>
<keyword id="KW-0805">Transcription regulation</keyword>
<protein>
    <recommendedName>
        <fullName>Arsenical resistance operon repressor</fullName>
    </recommendedName>
</protein>
<gene>
    <name type="primary">arsR</name>
</gene>